<name>TGB1_ICRSV</name>
<dbReference type="EMBL" id="AF406744">
    <property type="protein sequence ID" value="AAK97523.1"/>
    <property type="molecule type" value="Genomic_RNA"/>
</dbReference>
<dbReference type="RefSeq" id="NP_203554.1">
    <property type="nucleotide sequence ID" value="NC_003093.1"/>
</dbReference>
<dbReference type="KEGG" id="vg:922108"/>
<dbReference type="Proteomes" id="UP000000394">
    <property type="component" value="Segment"/>
</dbReference>
<dbReference type="GO" id="GO:0030430">
    <property type="term" value="C:host cell cytoplasm"/>
    <property type="evidence" value="ECO:0007669"/>
    <property type="project" value="UniProtKB-SubCell"/>
</dbReference>
<dbReference type="GO" id="GO:0005524">
    <property type="term" value="F:ATP binding"/>
    <property type="evidence" value="ECO:0007669"/>
    <property type="project" value="InterPro"/>
</dbReference>
<dbReference type="GO" id="GO:0003723">
    <property type="term" value="F:RNA binding"/>
    <property type="evidence" value="ECO:0007669"/>
    <property type="project" value="UniProtKB-KW"/>
</dbReference>
<dbReference type="GO" id="GO:0052170">
    <property type="term" value="P:symbiont-mediated suppression of host innate immune response"/>
    <property type="evidence" value="ECO:0007669"/>
    <property type="project" value="UniProtKB-KW"/>
</dbReference>
<dbReference type="GO" id="GO:0046740">
    <property type="term" value="P:transport of virus in host, cell to cell"/>
    <property type="evidence" value="ECO:0007669"/>
    <property type="project" value="UniProtKB-KW"/>
</dbReference>
<dbReference type="InterPro" id="IPR027351">
    <property type="entry name" value="(+)RNA_virus_helicase_core_dom"/>
</dbReference>
<dbReference type="Pfam" id="PF01443">
    <property type="entry name" value="Viral_helicase1"/>
    <property type="match status" value="1"/>
</dbReference>
<dbReference type="PROSITE" id="PS51657">
    <property type="entry name" value="PSRV_HELICASE"/>
    <property type="match status" value="1"/>
</dbReference>
<comment type="function">
    <text evidence="1">Transports viral genome to neighboring plant cells directly through plasmosdesmata, without any budding. The movement protein allows efficient cell to cell propagation, by bypassing the host cell wall barrier. Increases plasmodesma size exclusion limit. Acts as a suppressor of RNA-mediated gene silencing, also known as post-transcriptional gene silencing (PTGS), a mechanism of plant viral defense that limits the accumulation of viral RNAs (By similarity).</text>
</comment>
<comment type="subunit">
    <text evidence="1">Homodimer and homooligomer. Interacts with capsid protein. Interacts with host AGO1; this interaction targets the host protein for degradation, thereby suppressing the antiviral RNA silencing (By similarity).</text>
</comment>
<comment type="subcellular location">
    <subcellularLocation>
        <location evidence="1">Host cytoplasm</location>
    </subcellularLocation>
</comment>
<comment type="miscellaneous">
    <text>TGBp1, TGBp2 and TGBp3 seem to act together for cell-to-cell propagation. TGBp1 is the main movement protein that physically cross the plasmodesma with the viral genome. TGBp2 and TGBp3 would facilitate TGBp1 function.</text>
</comment>
<comment type="similarity">
    <text evidence="2">Belongs to the Tymovirales TGBp1 protein family.</text>
</comment>
<evidence type="ECO:0000250" key="1"/>
<evidence type="ECO:0000305" key="2"/>
<gene>
    <name type="ORF">ORF2</name>
</gene>
<organismHost>
    <name type="scientific">Citrus</name>
    <dbReference type="NCBI Taxonomy" id="2706"/>
</organismHost>
<accession>Q918W2</accession>
<reference key="1">
    <citation type="journal article" date="2000" name="Arch. Virol.">
        <title>Indian citrus ringspot virus: a proposed new species with some affinities to potex-, carla-, fovea- and allexiviruses.</title>
        <authorList>
            <person name="Rustici G."/>
            <person name="Accotto G.P."/>
            <person name="Noris E."/>
            <person name="Masenga V."/>
            <person name="Luisoni E."/>
            <person name="Milne R.G."/>
        </authorList>
    </citation>
    <scope>NUCLEOTIDE SEQUENCE [GENOMIC RNA]</scope>
</reference>
<reference key="2">
    <citation type="journal article" date="2002" name="Arch. Virol.">
        <title>Nucleotide sequence, genome organisation and phylogenetic analysis of Indian citrus ringspot virus.</title>
        <authorList>
            <person name="Rustici G."/>
            <person name="Milne R.G."/>
            <person name="Accotto G.P."/>
        </authorList>
    </citation>
    <scope>NUCLEOTIDE SEQUENCE [GENOMIC RNA]</scope>
</reference>
<sequence length="225" mass="24954">MDFAELLESKAFTRTRLPLSKPIVVHAVAGAGKTSLLENYARINPAARIYTPIAQQSNSLLLSPFTQSLEQADIVDEYPLSTLHPGVEYVLADPIQYLGSKDLLKPHYICPTTHRFGHSTAEFLTSLGIETYAHKPDRLTIANIFKTEPHGQVIACDLDTQQLAARHSLDYLRPCQSIGKTFKDTTILISHELNRDTLTKEIYIALTRHTNSVTILTPDAPSTSS</sequence>
<organism>
    <name type="scientific">Indian citrus ringspot virus (isolate Kinnow mandarin/India/K1/1996)</name>
    <name type="common">ICRSV</name>
    <dbReference type="NCBI Taxonomy" id="651357"/>
    <lineage>
        <taxon>Viruses</taxon>
        <taxon>Riboviria</taxon>
        <taxon>Orthornavirae</taxon>
        <taxon>Kitrinoviricota</taxon>
        <taxon>Alsuviricetes</taxon>
        <taxon>Tymovirales</taxon>
        <taxon>Alphaflexiviridae</taxon>
        <taxon>Potexvirus</taxon>
        <taxon>Mandarivirus</taxon>
        <taxon>Indian citrus ringspot virus</taxon>
    </lineage>
</organism>
<protein>
    <recommendedName>
        <fullName>Movement and silencing protein TGBp1</fullName>
    </recommendedName>
    <alternativeName>
        <fullName>25 kDa protein</fullName>
    </alternativeName>
    <alternativeName>
        <fullName>Silencing suppressor P25</fullName>
    </alternativeName>
    <alternativeName>
        <fullName>Triple gene block 1 protein</fullName>
        <shortName>TGBp1</shortName>
    </alternativeName>
</protein>
<proteinExistence type="inferred from homology"/>
<keyword id="KW-1035">Host cytoplasm</keyword>
<keyword id="KW-0945">Host-virus interaction</keyword>
<keyword id="KW-1090">Inhibition of host innate immune response by virus</keyword>
<keyword id="KW-1185">Reference proteome</keyword>
<keyword id="KW-0694">RNA-binding</keyword>
<keyword id="KW-0941">Suppressor of RNA silencing</keyword>
<keyword id="KW-0813">Transport</keyword>
<keyword id="KW-0899">Viral immunoevasion</keyword>
<keyword id="KW-0916">Viral movement protein</keyword>
<feature type="chain" id="PRO_0000401079" description="Movement and silencing protein TGBp1">
    <location>
        <begin position="1"/>
        <end position="225"/>
    </location>
</feature>
<feature type="domain" description="(+)RNA virus helicase ATP-binding">
    <location>
        <begin position="1"/>
        <end position="110"/>
    </location>
</feature>
<feature type="domain" description="(+)RNA virus helicase C-terminal">
    <location>
        <begin position="111"/>
        <end position="225"/>
    </location>
</feature>